<keyword id="KW-0963">Cytoplasm</keyword>
<keyword id="KW-0251">Elongation factor</keyword>
<keyword id="KW-0342">GTP-binding</keyword>
<keyword id="KW-0547">Nucleotide-binding</keyword>
<keyword id="KW-0648">Protein biosynthesis</keyword>
<keyword id="KW-1185">Reference proteome</keyword>
<gene>
    <name evidence="1" type="primary">fusA</name>
    <name type="ordered locus">RPB_2292</name>
</gene>
<comment type="function">
    <text evidence="1">Catalyzes the GTP-dependent ribosomal translocation step during translation elongation. During this step, the ribosome changes from the pre-translocational (PRE) to the post-translocational (POST) state as the newly formed A-site-bound peptidyl-tRNA and P-site-bound deacylated tRNA move to the P and E sites, respectively. Catalyzes the coordinated movement of the two tRNA molecules, the mRNA and conformational changes in the ribosome.</text>
</comment>
<comment type="subcellular location">
    <subcellularLocation>
        <location evidence="1">Cytoplasm</location>
    </subcellularLocation>
</comment>
<comment type="similarity">
    <text evidence="1">Belongs to the TRAFAC class translation factor GTPase superfamily. Classic translation factor GTPase family. EF-G/EF-2 subfamily.</text>
</comment>
<sequence>MPRVHAIEDYRNFGIMAHIDAGKTTTTERILFYTGKSHKIGEVHEGAATMDWMAQEQERGITITSAATTAFWNGKRLNIIDTPGHVDFTIEVERSLRVLDGAVCVLDSNQGVEPQTETVWRQGDKYRVPRIVFANKMDKTGADFFKCLQDIVDRLGAKPVAIQLPIGSENNFKGLIDLVRMKAVVWNDESLGAKFEDTDIPEDLLEQAKEYREKMIEAAVELDDDAMAAYLDGKEPDEATLKRLIRKAVLNGAFYPVLCGSAFKNKGVQPLLDAVVDYLPSPVDVPAIKGIDEDGNEVVRKADDSEPLALLAFKIMDDPFVGTITFCRIYSGVLQSGTGVVNSTREKKERIGRMLLMHANNREDIKEAYAGDIVALAGLKEARTGDTLCDPAKPVILEKMEFPEPVIEIAIEPKSKADQEKLGVALAKLAAEDPSFRVSTDIESGQTILKGMGELHLDIKVDILKRTYKVDANIGAPQVAFRERITKKAEVDYTHKKQTGGTGQFAAVSFIVEPNEPGAGYEFISKVVGGSVPKEYIPGVEKGIESVLGSGVVAGFPVVDVKVTLVDGKYHDVDSSALAFEIASRAAFREALQKGKSVLLEPIMKVECVTPEDYTGSVIGDLNSRRGQIQGQDMRGNANVINAMVPLMNMFGYVNNLRSMSQGRATFTMQFDHYAEAPANVSAEVQKKFA</sequence>
<accession>Q2IXR3</accession>
<protein>
    <recommendedName>
        <fullName evidence="1">Elongation factor G</fullName>
        <shortName evidence="1">EF-G</shortName>
    </recommendedName>
</protein>
<name>EFG_RHOP2</name>
<dbReference type="EMBL" id="CP000250">
    <property type="protein sequence ID" value="ABD06997.1"/>
    <property type="molecule type" value="Genomic_DNA"/>
</dbReference>
<dbReference type="RefSeq" id="WP_011441184.1">
    <property type="nucleotide sequence ID" value="NC_007778.1"/>
</dbReference>
<dbReference type="SMR" id="Q2IXR3"/>
<dbReference type="STRING" id="316058.RPB_2292"/>
<dbReference type="KEGG" id="rpb:RPB_2292"/>
<dbReference type="eggNOG" id="COG0480">
    <property type="taxonomic scope" value="Bacteria"/>
</dbReference>
<dbReference type="HOGENOM" id="CLU_002794_4_1_5"/>
<dbReference type="OrthoDB" id="9802948at2"/>
<dbReference type="Proteomes" id="UP000008809">
    <property type="component" value="Chromosome"/>
</dbReference>
<dbReference type="GO" id="GO:0005737">
    <property type="term" value="C:cytoplasm"/>
    <property type="evidence" value="ECO:0007669"/>
    <property type="project" value="UniProtKB-SubCell"/>
</dbReference>
<dbReference type="GO" id="GO:0005525">
    <property type="term" value="F:GTP binding"/>
    <property type="evidence" value="ECO:0007669"/>
    <property type="project" value="UniProtKB-UniRule"/>
</dbReference>
<dbReference type="GO" id="GO:0003924">
    <property type="term" value="F:GTPase activity"/>
    <property type="evidence" value="ECO:0007669"/>
    <property type="project" value="InterPro"/>
</dbReference>
<dbReference type="GO" id="GO:0097216">
    <property type="term" value="F:guanosine tetraphosphate binding"/>
    <property type="evidence" value="ECO:0007669"/>
    <property type="project" value="UniProtKB-ARBA"/>
</dbReference>
<dbReference type="GO" id="GO:0003746">
    <property type="term" value="F:translation elongation factor activity"/>
    <property type="evidence" value="ECO:0007669"/>
    <property type="project" value="UniProtKB-UniRule"/>
</dbReference>
<dbReference type="GO" id="GO:0032790">
    <property type="term" value="P:ribosome disassembly"/>
    <property type="evidence" value="ECO:0007669"/>
    <property type="project" value="TreeGrafter"/>
</dbReference>
<dbReference type="CDD" id="cd01886">
    <property type="entry name" value="EF-G"/>
    <property type="match status" value="1"/>
</dbReference>
<dbReference type="CDD" id="cd16262">
    <property type="entry name" value="EFG_III"/>
    <property type="match status" value="1"/>
</dbReference>
<dbReference type="CDD" id="cd01434">
    <property type="entry name" value="EFG_mtEFG1_IV"/>
    <property type="match status" value="1"/>
</dbReference>
<dbReference type="CDD" id="cd03713">
    <property type="entry name" value="EFG_mtEFG_C"/>
    <property type="match status" value="1"/>
</dbReference>
<dbReference type="CDD" id="cd04088">
    <property type="entry name" value="EFG_mtEFG_II"/>
    <property type="match status" value="1"/>
</dbReference>
<dbReference type="FunFam" id="2.40.30.10:FF:000006">
    <property type="entry name" value="Elongation factor G"/>
    <property type="match status" value="1"/>
</dbReference>
<dbReference type="FunFam" id="3.30.230.10:FF:000003">
    <property type="entry name" value="Elongation factor G"/>
    <property type="match status" value="1"/>
</dbReference>
<dbReference type="FunFam" id="3.30.70.240:FF:000001">
    <property type="entry name" value="Elongation factor G"/>
    <property type="match status" value="1"/>
</dbReference>
<dbReference type="FunFam" id="3.30.70.870:FF:000001">
    <property type="entry name" value="Elongation factor G"/>
    <property type="match status" value="1"/>
</dbReference>
<dbReference type="FunFam" id="3.40.50.300:FF:000029">
    <property type="entry name" value="Elongation factor G"/>
    <property type="match status" value="1"/>
</dbReference>
<dbReference type="Gene3D" id="3.30.230.10">
    <property type="match status" value="1"/>
</dbReference>
<dbReference type="Gene3D" id="3.30.70.240">
    <property type="match status" value="1"/>
</dbReference>
<dbReference type="Gene3D" id="3.30.70.870">
    <property type="entry name" value="Elongation Factor G (Translational Gtpase), domain 3"/>
    <property type="match status" value="1"/>
</dbReference>
<dbReference type="Gene3D" id="3.40.50.300">
    <property type="entry name" value="P-loop containing nucleotide triphosphate hydrolases"/>
    <property type="match status" value="1"/>
</dbReference>
<dbReference type="Gene3D" id="2.40.30.10">
    <property type="entry name" value="Translation factors"/>
    <property type="match status" value="1"/>
</dbReference>
<dbReference type="HAMAP" id="MF_00054_B">
    <property type="entry name" value="EF_G_EF_2_B"/>
    <property type="match status" value="1"/>
</dbReference>
<dbReference type="InterPro" id="IPR041095">
    <property type="entry name" value="EFG_II"/>
</dbReference>
<dbReference type="InterPro" id="IPR009022">
    <property type="entry name" value="EFG_III"/>
</dbReference>
<dbReference type="InterPro" id="IPR035647">
    <property type="entry name" value="EFG_III/V"/>
</dbReference>
<dbReference type="InterPro" id="IPR047872">
    <property type="entry name" value="EFG_IV"/>
</dbReference>
<dbReference type="InterPro" id="IPR035649">
    <property type="entry name" value="EFG_V"/>
</dbReference>
<dbReference type="InterPro" id="IPR000640">
    <property type="entry name" value="EFG_V-like"/>
</dbReference>
<dbReference type="InterPro" id="IPR004161">
    <property type="entry name" value="EFTu-like_2"/>
</dbReference>
<dbReference type="InterPro" id="IPR031157">
    <property type="entry name" value="G_TR_CS"/>
</dbReference>
<dbReference type="InterPro" id="IPR027417">
    <property type="entry name" value="P-loop_NTPase"/>
</dbReference>
<dbReference type="InterPro" id="IPR020568">
    <property type="entry name" value="Ribosomal_Su5_D2-typ_SF"/>
</dbReference>
<dbReference type="InterPro" id="IPR014721">
    <property type="entry name" value="Ribsml_uS5_D2-typ_fold_subgr"/>
</dbReference>
<dbReference type="InterPro" id="IPR005225">
    <property type="entry name" value="Small_GTP-bd"/>
</dbReference>
<dbReference type="InterPro" id="IPR000795">
    <property type="entry name" value="T_Tr_GTP-bd_dom"/>
</dbReference>
<dbReference type="InterPro" id="IPR009000">
    <property type="entry name" value="Transl_B-barrel_sf"/>
</dbReference>
<dbReference type="InterPro" id="IPR004540">
    <property type="entry name" value="Transl_elong_EFG/EF2"/>
</dbReference>
<dbReference type="InterPro" id="IPR005517">
    <property type="entry name" value="Transl_elong_EFG/EF2_IV"/>
</dbReference>
<dbReference type="NCBIfam" id="TIGR00484">
    <property type="entry name" value="EF-G"/>
    <property type="match status" value="1"/>
</dbReference>
<dbReference type="NCBIfam" id="NF009379">
    <property type="entry name" value="PRK12740.1-3"/>
    <property type="match status" value="1"/>
</dbReference>
<dbReference type="NCBIfam" id="NF009381">
    <property type="entry name" value="PRK12740.1-5"/>
    <property type="match status" value="1"/>
</dbReference>
<dbReference type="NCBIfam" id="TIGR00231">
    <property type="entry name" value="small_GTP"/>
    <property type="match status" value="1"/>
</dbReference>
<dbReference type="PANTHER" id="PTHR43261:SF1">
    <property type="entry name" value="RIBOSOME-RELEASING FACTOR 2, MITOCHONDRIAL"/>
    <property type="match status" value="1"/>
</dbReference>
<dbReference type="PANTHER" id="PTHR43261">
    <property type="entry name" value="TRANSLATION ELONGATION FACTOR G-RELATED"/>
    <property type="match status" value="1"/>
</dbReference>
<dbReference type="Pfam" id="PF00679">
    <property type="entry name" value="EFG_C"/>
    <property type="match status" value="1"/>
</dbReference>
<dbReference type="Pfam" id="PF14492">
    <property type="entry name" value="EFG_III"/>
    <property type="match status" value="1"/>
</dbReference>
<dbReference type="Pfam" id="PF03764">
    <property type="entry name" value="EFG_IV"/>
    <property type="match status" value="1"/>
</dbReference>
<dbReference type="Pfam" id="PF00009">
    <property type="entry name" value="GTP_EFTU"/>
    <property type="match status" value="1"/>
</dbReference>
<dbReference type="Pfam" id="PF03144">
    <property type="entry name" value="GTP_EFTU_D2"/>
    <property type="match status" value="1"/>
</dbReference>
<dbReference type="PRINTS" id="PR00315">
    <property type="entry name" value="ELONGATNFCT"/>
</dbReference>
<dbReference type="SMART" id="SM00838">
    <property type="entry name" value="EFG_C"/>
    <property type="match status" value="1"/>
</dbReference>
<dbReference type="SMART" id="SM00889">
    <property type="entry name" value="EFG_IV"/>
    <property type="match status" value="1"/>
</dbReference>
<dbReference type="SUPFAM" id="SSF54980">
    <property type="entry name" value="EF-G C-terminal domain-like"/>
    <property type="match status" value="2"/>
</dbReference>
<dbReference type="SUPFAM" id="SSF52540">
    <property type="entry name" value="P-loop containing nucleoside triphosphate hydrolases"/>
    <property type="match status" value="1"/>
</dbReference>
<dbReference type="SUPFAM" id="SSF54211">
    <property type="entry name" value="Ribosomal protein S5 domain 2-like"/>
    <property type="match status" value="1"/>
</dbReference>
<dbReference type="SUPFAM" id="SSF50447">
    <property type="entry name" value="Translation proteins"/>
    <property type="match status" value="1"/>
</dbReference>
<dbReference type="PROSITE" id="PS00301">
    <property type="entry name" value="G_TR_1"/>
    <property type="match status" value="1"/>
</dbReference>
<dbReference type="PROSITE" id="PS51722">
    <property type="entry name" value="G_TR_2"/>
    <property type="match status" value="1"/>
</dbReference>
<proteinExistence type="inferred from homology"/>
<feature type="chain" id="PRO_0000263495" description="Elongation factor G">
    <location>
        <begin position="1"/>
        <end position="690"/>
    </location>
</feature>
<feature type="domain" description="tr-type G">
    <location>
        <begin position="8"/>
        <end position="283"/>
    </location>
</feature>
<feature type="binding site" evidence="1">
    <location>
        <begin position="17"/>
        <end position="24"/>
    </location>
    <ligand>
        <name>GTP</name>
        <dbReference type="ChEBI" id="CHEBI:37565"/>
    </ligand>
</feature>
<feature type="binding site" evidence="1">
    <location>
        <begin position="81"/>
        <end position="85"/>
    </location>
    <ligand>
        <name>GTP</name>
        <dbReference type="ChEBI" id="CHEBI:37565"/>
    </ligand>
</feature>
<feature type="binding site" evidence="1">
    <location>
        <begin position="135"/>
        <end position="138"/>
    </location>
    <ligand>
        <name>GTP</name>
        <dbReference type="ChEBI" id="CHEBI:37565"/>
    </ligand>
</feature>
<reference key="1">
    <citation type="submission" date="2006-01" db="EMBL/GenBank/DDBJ databases">
        <title>Complete sequence of Rhodopseudomonas palustris HaA2.</title>
        <authorList>
            <consortium name="US DOE Joint Genome Institute"/>
            <person name="Copeland A."/>
            <person name="Lucas S."/>
            <person name="Lapidus A."/>
            <person name="Barry K."/>
            <person name="Detter J.C."/>
            <person name="Glavina T."/>
            <person name="Hammon N."/>
            <person name="Israni S."/>
            <person name="Pitluck S."/>
            <person name="Chain P."/>
            <person name="Malfatti S."/>
            <person name="Shin M."/>
            <person name="Vergez L."/>
            <person name="Schmutz J."/>
            <person name="Larimer F."/>
            <person name="Land M."/>
            <person name="Hauser L."/>
            <person name="Pelletier D.A."/>
            <person name="Kyrpides N."/>
            <person name="Anderson I."/>
            <person name="Oda Y."/>
            <person name="Harwood C.S."/>
            <person name="Richardson P."/>
        </authorList>
    </citation>
    <scope>NUCLEOTIDE SEQUENCE [LARGE SCALE GENOMIC DNA]</scope>
    <source>
        <strain>HaA2</strain>
    </source>
</reference>
<organism>
    <name type="scientific">Rhodopseudomonas palustris (strain HaA2)</name>
    <dbReference type="NCBI Taxonomy" id="316058"/>
    <lineage>
        <taxon>Bacteria</taxon>
        <taxon>Pseudomonadati</taxon>
        <taxon>Pseudomonadota</taxon>
        <taxon>Alphaproteobacteria</taxon>
        <taxon>Hyphomicrobiales</taxon>
        <taxon>Nitrobacteraceae</taxon>
        <taxon>Rhodopseudomonas</taxon>
    </lineage>
</organism>
<evidence type="ECO:0000255" key="1">
    <source>
        <dbReference type="HAMAP-Rule" id="MF_00054"/>
    </source>
</evidence>